<proteinExistence type="evidence at protein level"/>
<organism>
    <name type="scientific">Phyla dulcis</name>
    <name type="common">Aztec sweet herb</name>
    <name type="synonym">Lippia dulcis</name>
    <dbReference type="NCBI Taxonomy" id="542674"/>
    <lineage>
        <taxon>Eukaryota</taxon>
        <taxon>Viridiplantae</taxon>
        <taxon>Streptophyta</taxon>
        <taxon>Embryophyta</taxon>
        <taxon>Tracheophyta</taxon>
        <taxon>Spermatophyta</taxon>
        <taxon>Magnoliopsida</taxon>
        <taxon>eudicotyledons</taxon>
        <taxon>Gunneridae</taxon>
        <taxon>Pentapetalae</taxon>
        <taxon>asterids</taxon>
        <taxon>lamiids</taxon>
        <taxon>Lamiales</taxon>
        <taxon>Verbenaceae</taxon>
        <taxon>Lantaneae</taxon>
        <taxon>Phyla</taxon>
    </lineage>
</organism>
<protein>
    <recommendedName>
        <fullName>Bifunctional sesquiterpene synthase 1</fullName>
    </recommendedName>
    <alternativeName>
        <fullName>Alpha-copaene synthase</fullName>
        <ecNumber>4.2.3.133</ecNumber>
    </alternativeName>
    <alternativeName>
        <fullName>Delta-cadinene synthase</fullName>
        <ecNumber>4.2.3.-</ecNumber>
    </alternativeName>
    <alternativeName>
        <fullName>Terpene synthase 1</fullName>
        <shortName>LdTPS1</shortName>
    </alternativeName>
</protein>
<evidence type="ECO:0000250" key="1"/>
<evidence type="ECO:0000269" key="2">
    <source>
    </source>
</evidence>
<evidence type="ECO:0000305" key="3"/>
<keyword id="KW-0456">Lyase</keyword>
<keyword id="KW-0460">Magnesium</keyword>
<keyword id="KW-0479">Metal-binding</keyword>
<comment type="function">
    <text evidence="2">Sesquiterpene synthase converting farnesyl diphosphate to alpha copaene and delta-cadinene as the major products.</text>
</comment>
<comment type="catalytic activity">
    <reaction evidence="2">
        <text>(2E,6E)-farnesyl diphosphate = alpha-copaene + diphosphate</text>
        <dbReference type="Rhea" id="RHEA:33991"/>
        <dbReference type="ChEBI" id="CHEBI:10221"/>
        <dbReference type="ChEBI" id="CHEBI:33019"/>
        <dbReference type="ChEBI" id="CHEBI:175763"/>
        <dbReference type="EC" id="4.2.3.133"/>
    </reaction>
</comment>
<comment type="catalytic activity">
    <reaction evidence="2">
        <text>(2E,6E)-farnesyl diphosphate = delta-cadinene + diphosphate</text>
        <dbReference type="Rhea" id="RHEA:56556"/>
        <dbReference type="ChEBI" id="CHEBI:33019"/>
        <dbReference type="ChEBI" id="CHEBI:140564"/>
        <dbReference type="ChEBI" id="CHEBI:175763"/>
    </reaction>
</comment>
<comment type="cofactor">
    <cofactor evidence="1">
        <name>Mg(2+)</name>
        <dbReference type="ChEBI" id="CHEBI:18420"/>
    </cofactor>
    <text evidence="1">Binds 3 Mg(2+) ions per subunit.</text>
</comment>
<comment type="pathway">
    <text>Secondary metabolite biosynthesis; terpenoid biosynthesis.</text>
</comment>
<comment type="domain">
    <text evidence="1">The Asp-Asp-Xaa-Xaa-Asp/Glu (DDXXD/E) motif is important for the catalytic activity, presumably through binding to Mg(2+).</text>
</comment>
<comment type="similarity">
    <text evidence="3">Belongs to the terpene synthase family.</text>
</comment>
<accession>J7LP58</accession>
<dbReference type="EC" id="4.2.3.133"/>
<dbReference type="EC" id="4.2.3.-"/>
<dbReference type="EMBL" id="JQ731632">
    <property type="protein sequence ID" value="AFR23368.1"/>
    <property type="molecule type" value="mRNA"/>
</dbReference>
<dbReference type="SMR" id="J7LP58"/>
<dbReference type="BRENDA" id="4.2.3.13">
    <property type="organism ID" value="13174"/>
</dbReference>
<dbReference type="BRENDA" id="4.2.3.133">
    <property type="organism ID" value="13174"/>
</dbReference>
<dbReference type="UniPathway" id="UPA00213"/>
<dbReference type="GO" id="GO:0102877">
    <property type="term" value="F:alpha-copaene synthase activity"/>
    <property type="evidence" value="ECO:0007669"/>
    <property type="project" value="UniProtKB-EC"/>
</dbReference>
<dbReference type="GO" id="GO:0000287">
    <property type="term" value="F:magnesium ion binding"/>
    <property type="evidence" value="ECO:0007669"/>
    <property type="project" value="InterPro"/>
</dbReference>
<dbReference type="GO" id="GO:0010334">
    <property type="term" value="F:sesquiterpene synthase activity"/>
    <property type="evidence" value="ECO:0000314"/>
    <property type="project" value="UniProtKB"/>
</dbReference>
<dbReference type="GO" id="GO:1901931">
    <property type="term" value="P:alpha-copaene biosynthetic process"/>
    <property type="evidence" value="ECO:0000314"/>
    <property type="project" value="UniProtKB"/>
</dbReference>
<dbReference type="GO" id="GO:1901928">
    <property type="term" value="P:cadinene biosynthetic process"/>
    <property type="evidence" value="ECO:0000314"/>
    <property type="project" value="UniProtKB"/>
</dbReference>
<dbReference type="GO" id="GO:0016102">
    <property type="term" value="P:diterpenoid biosynthetic process"/>
    <property type="evidence" value="ECO:0007669"/>
    <property type="project" value="InterPro"/>
</dbReference>
<dbReference type="GO" id="GO:0045339">
    <property type="term" value="P:farnesyl diphosphate catabolic process"/>
    <property type="evidence" value="ECO:0000314"/>
    <property type="project" value="UniProtKB"/>
</dbReference>
<dbReference type="CDD" id="cd00684">
    <property type="entry name" value="Terpene_cyclase_plant_C1"/>
    <property type="match status" value="1"/>
</dbReference>
<dbReference type="FunFam" id="1.10.600.10:FF:000007">
    <property type="entry name" value="Isoprene synthase, chloroplastic"/>
    <property type="match status" value="1"/>
</dbReference>
<dbReference type="FunFam" id="1.50.10.130:FF:000001">
    <property type="entry name" value="Isoprene synthase, chloroplastic"/>
    <property type="match status" value="1"/>
</dbReference>
<dbReference type="Gene3D" id="1.10.600.10">
    <property type="entry name" value="Farnesyl Diphosphate Synthase"/>
    <property type="match status" value="1"/>
</dbReference>
<dbReference type="Gene3D" id="1.50.10.130">
    <property type="entry name" value="Terpene synthase, N-terminal domain"/>
    <property type="match status" value="1"/>
</dbReference>
<dbReference type="InterPro" id="IPR008949">
    <property type="entry name" value="Isoprenoid_synthase_dom_sf"/>
</dbReference>
<dbReference type="InterPro" id="IPR034741">
    <property type="entry name" value="Terpene_cyclase-like_1_C"/>
</dbReference>
<dbReference type="InterPro" id="IPR044814">
    <property type="entry name" value="Terpene_cyclase_plant_C1"/>
</dbReference>
<dbReference type="InterPro" id="IPR001906">
    <property type="entry name" value="Terpene_synth_N"/>
</dbReference>
<dbReference type="InterPro" id="IPR036965">
    <property type="entry name" value="Terpene_synth_N_sf"/>
</dbReference>
<dbReference type="InterPro" id="IPR050148">
    <property type="entry name" value="Terpene_synthase-like"/>
</dbReference>
<dbReference type="InterPro" id="IPR005630">
    <property type="entry name" value="Terpene_synthase_metal-bd"/>
</dbReference>
<dbReference type="InterPro" id="IPR008930">
    <property type="entry name" value="Terpenoid_cyclase/PrenylTrfase"/>
</dbReference>
<dbReference type="PANTHER" id="PTHR31225:SF221">
    <property type="entry name" value="(-)-GERMACRENE D SYNTHASE"/>
    <property type="match status" value="1"/>
</dbReference>
<dbReference type="PANTHER" id="PTHR31225">
    <property type="entry name" value="OS04G0344100 PROTEIN-RELATED"/>
    <property type="match status" value="1"/>
</dbReference>
<dbReference type="Pfam" id="PF01397">
    <property type="entry name" value="Terpene_synth"/>
    <property type="match status" value="1"/>
</dbReference>
<dbReference type="Pfam" id="PF03936">
    <property type="entry name" value="Terpene_synth_C"/>
    <property type="match status" value="1"/>
</dbReference>
<dbReference type="SFLD" id="SFLDS00005">
    <property type="entry name" value="Isoprenoid_Synthase_Type_I"/>
    <property type="match status" value="1"/>
</dbReference>
<dbReference type="SFLD" id="SFLDG01019">
    <property type="entry name" value="Terpene_Cyclase_Like_1_C_Termi"/>
    <property type="match status" value="1"/>
</dbReference>
<dbReference type="SUPFAM" id="SSF48239">
    <property type="entry name" value="Terpenoid cyclases/Protein prenyltransferases"/>
    <property type="match status" value="1"/>
</dbReference>
<dbReference type="SUPFAM" id="SSF48576">
    <property type="entry name" value="Terpenoid synthases"/>
    <property type="match status" value="1"/>
</dbReference>
<reference key="1">
    <citation type="journal article" date="2012" name="Arch. Biochem. Biophys.">
        <title>Molecular cloning and characterization of (+)-epi-alpha-bisabolol synthase, catalyzing the first step in the biosynthesis of the natural sweetener, hernandulcin, in Lippia dulcis.</title>
        <authorList>
            <person name="Attia M."/>
            <person name="Kim S.U."/>
            <person name="Ro D.K."/>
        </authorList>
    </citation>
    <scope>NUCLEOTIDE SEQUENCE [MRNA]</scope>
    <scope>FUNCTION</scope>
    <scope>CATALYTIC ACTIVITY</scope>
</reference>
<sequence>MALAKESSIVVSSSPDVTHNITRPVASYHPNVWGDRFLLSSSDQVQLTMKARDDKVVVDELKKEVRRKLKEASNDYIRLLQTVDVIQRLGLAYHFEEEIDQALRYLFETFHDYSEDSQDMYANSLSFRLLRQHGYRISCEIFEKFKDANGGFKIPNIEGVMGMLEFYEATHLRVRGEDILDHGFVFSRNYLKSVLPSLSNPLAAQVDRALNQNSNRRGLPRLEARHFMSVYEQYASHDQALLKLAKLNFNILQSLHKVELSEISRWWKGVDIARNFPYARDRIVELYFWVLGVYFEPQYAVGRKITTKVIAIASLLDDTFDAYGTFEELRIFAEAVERWSVSCLDQLPEYMKLLYKTMLEVSDEIEEEMTKLGTPFRIAYGIEAIKTFARSYFLEAKWREEKYKPTTEEYMGLATKTCGYKSLIITSFLAMGDIPKREHFDWVLSDPDFVMASCIICRLADDIVGHEFEQTRDHIPSSVECYTQEHKTSKEDAVNELYDRLESAWKDLNEGFLRPTKIPAALLYRVLNYCRIIEVMYSRGDWYTHVGPEMQGFVRQLLVDPVPE</sequence>
<feature type="chain" id="PRO_0000421951" description="Bifunctional sesquiterpene synthase 1">
    <location>
        <begin position="1"/>
        <end position="564"/>
    </location>
</feature>
<feature type="short sequence motif" description="DDXXD motif">
    <location>
        <begin position="317"/>
        <end position="321"/>
    </location>
</feature>
<feature type="binding site" evidence="1">
    <location>
        <position position="317"/>
    </location>
    <ligand>
        <name>Mg(2+)</name>
        <dbReference type="ChEBI" id="CHEBI:18420"/>
        <label>1</label>
    </ligand>
</feature>
<feature type="binding site" evidence="1">
    <location>
        <position position="317"/>
    </location>
    <ligand>
        <name>Mg(2+)</name>
        <dbReference type="ChEBI" id="CHEBI:18420"/>
        <label>2</label>
    </ligand>
</feature>
<feature type="binding site" evidence="1">
    <location>
        <position position="321"/>
    </location>
    <ligand>
        <name>Mg(2+)</name>
        <dbReference type="ChEBI" id="CHEBI:18420"/>
        <label>1</label>
    </ligand>
</feature>
<feature type="binding site" evidence="1">
    <location>
        <position position="321"/>
    </location>
    <ligand>
        <name>Mg(2+)</name>
        <dbReference type="ChEBI" id="CHEBI:18420"/>
        <label>2</label>
    </ligand>
</feature>
<feature type="binding site" evidence="1">
    <location>
        <position position="461"/>
    </location>
    <ligand>
        <name>Mg(2+)</name>
        <dbReference type="ChEBI" id="CHEBI:18420"/>
        <label>3</label>
    </ligand>
</feature>
<feature type="binding site" evidence="1">
    <location>
        <position position="469"/>
    </location>
    <ligand>
        <name>Mg(2+)</name>
        <dbReference type="ChEBI" id="CHEBI:18420"/>
        <label>3</label>
    </ligand>
</feature>
<name>TPS1_PHYDL</name>